<accession>A7X127</accession>
<feature type="chain" id="PRO_0000348993" description="Heme A synthase">
    <location>
        <begin position="1"/>
        <end position="303"/>
    </location>
</feature>
<feature type="topological domain" description="Cytoplasmic" evidence="1">
    <location>
        <begin position="1"/>
        <end position="8"/>
    </location>
</feature>
<feature type="transmembrane region" description="Helical" evidence="1">
    <location>
        <begin position="9"/>
        <end position="29"/>
    </location>
</feature>
<feature type="topological domain" description="Extracellular" evidence="1">
    <location>
        <begin position="30"/>
        <end position="67"/>
    </location>
</feature>
<feature type="transmembrane region" description="Helical" evidence="1">
    <location>
        <begin position="68"/>
        <end position="88"/>
    </location>
</feature>
<feature type="topological domain" description="Cytoplasmic" evidence="1">
    <location>
        <begin position="89"/>
        <end position="93"/>
    </location>
</feature>
<feature type="transmembrane region" description="Helical" evidence="1">
    <location>
        <begin position="94"/>
        <end position="114"/>
    </location>
</feature>
<feature type="topological domain" description="Extracellular" evidence="1">
    <location>
        <begin position="115"/>
        <end position="125"/>
    </location>
</feature>
<feature type="transmembrane region" description="Helical" evidence="1">
    <location>
        <begin position="126"/>
        <end position="146"/>
    </location>
</feature>
<feature type="topological domain" description="Cytoplasmic" evidence="1">
    <location>
        <begin position="147"/>
        <end position="163"/>
    </location>
</feature>
<feature type="transmembrane region" description="Helical" evidence="1">
    <location>
        <begin position="164"/>
        <end position="184"/>
    </location>
</feature>
<feature type="topological domain" description="Extracellular" evidence="1">
    <location>
        <begin position="185"/>
        <end position="215"/>
    </location>
</feature>
<feature type="transmembrane region" description="Helical" evidence="1">
    <location>
        <begin position="216"/>
        <end position="236"/>
    </location>
</feature>
<feature type="topological domain" description="Cytoplasmic" evidence="1">
    <location>
        <begin position="237"/>
        <end position="244"/>
    </location>
</feature>
<feature type="transmembrane region" description="Helical" evidence="1">
    <location>
        <begin position="245"/>
        <end position="265"/>
    </location>
</feature>
<feature type="topological domain" description="Extracellular" evidence="1">
    <location>
        <begin position="266"/>
        <end position="270"/>
    </location>
</feature>
<feature type="transmembrane region" description="Helical" evidence="1">
    <location>
        <begin position="271"/>
        <end position="291"/>
    </location>
</feature>
<feature type="topological domain" description="Cytoplasmic" evidence="1">
    <location>
        <begin position="292"/>
        <end position="303"/>
    </location>
</feature>
<feature type="active site" evidence="1">
    <location>
        <position position="60"/>
    </location>
</feature>
<feature type="binding site" description="axial binding residue" evidence="1">
    <location>
        <position position="63"/>
    </location>
    <ligand>
        <name>heme o</name>
        <dbReference type="ChEBI" id="CHEBI:24480"/>
    </ligand>
    <ligandPart>
        <name>Fe</name>
        <dbReference type="ChEBI" id="CHEBI:18248"/>
    </ligandPart>
</feature>
<feature type="binding site" description="axial binding residue" evidence="1">
    <location>
        <position position="125"/>
    </location>
    <ligand>
        <name>heme o</name>
        <dbReference type="ChEBI" id="CHEBI:24480"/>
    </ligand>
    <ligandPart>
        <name>Fe</name>
        <dbReference type="ChEBI" id="CHEBI:18248"/>
    </ligandPart>
</feature>
<feature type="binding site" description="axial binding residue" evidence="1">
    <location>
        <position position="214"/>
    </location>
    <ligand>
        <name>heme b</name>
        <dbReference type="ChEBI" id="CHEBI:60344"/>
    </ligand>
    <ligandPart>
        <name>Fe</name>
        <dbReference type="ChEBI" id="CHEBI:18248"/>
    </ligandPart>
</feature>
<feature type="binding site" description="axial binding residue" evidence="1">
    <location>
        <position position="276"/>
    </location>
    <ligand>
        <name>heme b</name>
        <dbReference type="ChEBI" id="CHEBI:60344"/>
    </ligand>
    <ligandPart>
        <name>Fe</name>
        <dbReference type="ChEBI" id="CHEBI:18248"/>
    </ligandPart>
</feature>
<feature type="disulfide bond" description="Essential for catalytic activity" evidence="1">
    <location>
        <begin position="37"/>
        <end position="44"/>
    </location>
</feature>
<comment type="function">
    <text evidence="1">Catalyzes the conversion of heme O to heme A by two successive hydroxylations of the methyl group at C8. The first hydroxylation forms heme I, the second hydroxylation results in an unstable dihydroxymethyl group, which spontaneously dehydrates, resulting in the formyl group of heme A.</text>
</comment>
<comment type="catalytic activity">
    <reaction evidence="1">
        <text>Fe(II)-heme o + 2 A + H2O = Fe(II)-heme a + 2 AH2</text>
        <dbReference type="Rhea" id="RHEA:63388"/>
        <dbReference type="ChEBI" id="CHEBI:13193"/>
        <dbReference type="ChEBI" id="CHEBI:15377"/>
        <dbReference type="ChEBI" id="CHEBI:17499"/>
        <dbReference type="ChEBI" id="CHEBI:60530"/>
        <dbReference type="ChEBI" id="CHEBI:61715"/>
        <dbReference type="EC" id="1.17.99.9"/>
    </reaction>
    <physiologicalReaction direction="left-to-right" evidence="1">
        <dbReference type="Rhea" id="RHEA:63389"/>
    </physiologicalReaction>
</comment>
<comment type="cofactor">
    <cofactor evidence="1">
        <name>heme b</name>
        <dbReference type="ChEBI" id="CHEBI:60344"/>
    </cofactor>
</comment>
<comment type="pathway">
    <text evidence="1">Porphyrin-containing compound metabolism; heme A biosynthesis; heme A from heme O: step 1/1.</text>
</comment>
<comment type="subunit">
    <text evidence="1">Interacts with CtaB.</text>
</comment>
<comment type="subcellular location">
    <subcellularLocation>
        <location evidence="1">Cell membrane</location>
        <topology evidence="1">Multi-pass membrane protein</topology>
    </subcellularLocation>
</comment>
<comment type="domain">
    <text evidence="1">The N-half (TM1-TM4) and C-half (TM5-TM8) domains are connected by an intracellular loop. Each domain is formed from four-helix bundles and they align in a pseudo twofold symmetry manner. The N-half domain is the substrate-heme O binding domain and the C-half domain is the cofactor heme B binding domain.</text>
</comment>
<comment type="domain">
    <text evidence="1">The cysteines of disulfide bond Cys-37 and Cys-44 may be involved in transfer of reducing equivalents from quinol in the membrane to the active site of the enzyme.</text>
</comment>
<comment type="similarity">
    <text evidence="1">Belongs to the COX15/CtaA family. Type 1 subfamily.</text>
</comment>
<sequence>MFGKKNLKWLGVVATLMMTFVQLGGALVTKTGSADGCGSSWPLCHGALIPEFFPIDTIIELSHRAVSALSLLMVLWLVITAWKHIGYIKEIKPLSIISVGFLLLQALIGAAAVIWQQNDYVLALHFGISLISFSSVFLITLIIFSIDQKYEADELYIKKPLRRLTWLMAIIIYCGVYTGALVRHADASLAYGGWPLPFHDLVPHSEQDWVQLTHRIMAFIVFTIIMITYIHAVKNYPNNRTVHYGYTAAFILVILQVITGALSIMTNVNLIIALFHALFITYLFGMTTYFIMLMLRSVRSDKQ</sequence>
<name>CTAA_STAA1</name>
<evidence type="ECO:0000255" key="1">
    <source>
        <dbReference type="HAMAP-Rule" id="MF_01664"/>
    </source>
</evidence>
<protein>
    <recommendedName>
        <fullName evidence="1">Heme A synthase</fullName>
        <shortName evidence="1">HAS</shortName>
        <ecNumber evidence="1">1.17.99.9</ecNumber>
    </recommendedName>
    <alternativeName>
        <fullName evidence="1">Cytochrome aa3-controlling protein</fullName>
    </alternativeName>
</protein>
<keyword id="KW-1003">Cell membrane</keyword>
<keyword id="KW-1015">Disulfide bond</keyword>
<keyword id="KW-0350">Heme biosynthesis</keyword>
<keyword id="KW-0408">Iron</keyword>
<keyword id="KW-0472">Membrane</keyword>
<keyword id="KW-0479">Metal-binding</keyword>
<keyword id="KW-0560">Oxidoreductase</keyword>
<keyword id="KW-0812">Transmembrane</keyword>
<keyword id="KW-1133">Transmembrane helix</keyword>
<gene>
    <name evidence="1" type="primary">ctaA</name>
    <name type="ordered locus">SAHV_1107</name>
</gene>
<proteinExistence type="inferred from homology"/>
<organism>
    <name type="scientific">Staphylococcus aureus (strain Mu3 / ATCC 700698)</name>
    <dbReference type="NCBI Taxonomy" id="418127"/>
    <lineage>
        <taxon>Bacteria</taxon>
        <taxon>Bacillati</taxon>
        <taxon>Bacillota</taxon>
        <taxon>Bacilli</taxon>
        <taxon>Bacillales</taxon>
        <taxon>Staphylococcaceae</taxon>
        <taxon>Staphylococcus</taxon>
    </lineage>
</organism>
<reference key="1">
    <citation type="journal article" date="2008" name="Antimicrob. Agents Chemother.">
        <title>Mutated response regulator graR is responsible for phenotypic conversion of Staphylococcus aureus from heterogeneous vancomycin-intermediate resistance to vancomycin-intermediate resistance.</title>
        <authorList>
            <person name="Neoh H.-M."/>
            <person name="Cui L."/>
            <person name="Yuzawa H."/>
            <person name="Takeuchi F."/>
            <person name="Matsuo M."/>
            <person name="Hiramatsu K."/>
        </authorList>
    </citation>
    <scope>NUCLEOTIDE SEQUENCE [LARGE SCALE GENOMIC DNA]</scope>
    <source>
        <strain>Mu3 / ATCC 700698</strain>
    </source>
</reference>
<dbReference type="EC" id="1.17.99.9" evidence="1"/>
<dbReference type="EMBL" id="AP009324">
    <property type="protein sequence ID" value="BAF77990.1"/>
    <property type="molecule type" value="Genomic_DNA"/>
</dbReference>
<dbReference type="RefSeq" id="WP_000467123.1">
    <property type="nucleotide sequence ID" value="NZ_CTYB01000001.1"/>
</dbReference>
<dbReference type="SMR" id="A7X127"/>
<dbReference type="KEGG" id="saw:SAHV_1107"/>
<dbReference type="HOGENOM" id="CLU_041525_3_1_9"/>
<dbReference type="UniPathway" id="UPA00269">
    <property type="reaction ID" value="UER00713"/>
</dbReference>
<dbReference type="GO" id="GO:0005886">
    <property type="term" value="C:plasma membrane"/>
    <property type="evidence" value="ECO:0007669"/>
    <property type="project" value="UniProtKB-SubCell"/>
</dbReference>
<dbReference type="GO" id="GO:0046872">
    <property type="term" value="F:metal ion binding"/>
    <property type="evidence" value="ECO:0007669"/>
    <property type="project" value="UniProtKB-KW"/>
</dbReference>
<dbReference type="GO" id="GO:0016653">
    <property type="term" value="F:oxidoreductase activity, acting on NAD(P)H, heme protein as acceptor"/>
    <property type="evidence" value="ECO:0007669"/>
    <property type="project" value="InterPro"/>
</dbReference>
<dbReference type="GO" id="GO:0006784">
    <property type="term" value="P:heme A biosynthetic process"/>
    <property type="evidence" value="ECO:0007669"/>
    <property type="project" value="UniProtKB-UniRule"/>
</dbReference>
<dbReference type="HAMAP" id="MF_01664">
    <property type="entry name" value="HemeA_synth_type1"/>
    <property type="match status" value="1"/>
</dbReference>
<dbReference type="InterPro" id="IPR003780">
    <property type="entry name" value="COX15/CtaA_fam"/>
</dbReference>
<dbReference type="InterPro" id="IPR050450">
    <property type="entry name" value="COX15/CtaA_HemeA_synthase"/>
</dbReference>
<dbReference type="InterPro" id="IPR023755">
    <property type="entry name" value="HemeA_Synthase_type1"/>
</dbReference>
<dbReference type="PANTHER" id="PTHR35457">
    <property type="entry name" value="HEME A SYNTHASE"/>
    <property type="match status" value="1"/>
</dbReference>
<dbReference type="PANTHER" id="PTHR35457:SF1">
    <property type="entry name" value="HEME A SYNTHASE"/>
    <property type="match status" value="1"/>
</dbReference>
<dbReference type="Pfam" id="PF02628">
    <property type="entry name" value="COX15-CtaA"/>
    <property type="match status" value="1"/>
</dbReference>